<proteinExistence type="inferred from homology"/>
<evidence type="ECO:0000250" key="1"/>
<evidence type="ECO:0000255" key="2"/>
<evidence type="ECO:0000305" key="3"/>
<feature type="chain" id="PRO_0000207552" description="Protein transport protein BOS1">
    <location>
        <begin position="1"/>
        <end position="240"/>
    </location>
</feature>
<feature type="topological domain" description="Cytoplasmic" evidence="2">
    <location>
        <begin position="1"/>
        <end position="218"/>
    </location>
</feature>
<feature type="transmembrane region" description="Helical; Anchor for type IV membrane protein" evidence="2">
    <location>
        <begin position="219"/>
        <end position="239"/>
    </location>
</feature>
<feature type="topological domain" description="Vesicular" evidence="2">
    <location>
        <position position="240"/>
    </location>
</feature>
<name>BOS1_CANGA</name>
<keyword id="KW-0256">Endoplasmic reticulum</keyword>
<keyword id="KW-0931">ER-Golgi transport</keyword>
<keyword id="KW-0333">Golgi apparatus</keyword>
<keyword id="KW-0472">Membrane</keyword>
<keyword id="KW-0653">Protein transport</keyword>
<keyword id="KW-1185">Reference proteome</keyword>
<keyword id="KW-0812">Transmembrane</keyword>
<keyword id="KW-1133">Transmembrane helix</keyword>
<keyword id="KW-0813">Transport</keyword>
<sequence>MNALYIHAQKQKTQLQQDIAKFEQDNLTAPISLQGSISATLVAFEKTIEQYKQHFDKRRAGGSNDEEQLDPKYELRLVSLKKDHKDFDAKFKELKQKYNENNARSKLFESPLDAQTGGESVMNQRRTATNDHTSQPGNTSSNYGLPMYDGLQKEQSIFQRGNAQLDMILEMGQQSLDDIMEQNQILLKVQDQMSRSLRTLGVSEETIQTINKRVFKDKLIFILIIFLFLVGVYYVLKWFR</sequence>
<gene>
    <name type="primary">BOS1</name>
    <name type="ordered locus">CAGL0L13200g</name>
</gene>
<accession>Q6FKA1</accession>
<reference key="1">
    <citation type="journal article" date="2004" name="Nature">
        <title>Genome evolution in yeasts.</title>
        <authorList>
            <person name="Dujon B."/>
            <person name="Sherman D."/>
            <person name="Fischer G."/>
            <person name="Durrens P."/>
            <person name="Casaregola S."/>
            <person name="Lafontaine I."/>
            <person name="de Montigny J."/>
            <person name="Marck C."/>
            <person name="Neuveglise C."/>
            <person name="Talla E."/>
            <person name="Goffard N."/>
            <person name="Frangeul L."/>
            <person name="Aigle M."/>
            <person name="Anthouard V."/>
            <person name="Babour A."/>
            <person name="Barbe V."/>
            <person name="Barnay S."/>
            <person name="Blanchin S."/>
            <person name="Beckerich J.-M."/>
            <person name="Beyne E."/>
            <person name="Bleykasten C."/>
            <person name="Boisrame A."/>
            <person name="Boyer J."/>
            <person name="Cattolico L."/>
            <person name="Confanioleri F."/>
            <person name="de Daruvar A."/>
            <person name="Despons L."/>
            <person name="Fabre E."/>
            <person name="Fairhead C."/>
            <person name="Ferry-Dumazet H."/>
            <person name="Groppi A."/>
            <person name="Hantraye F."/>
            <person name="Hennequin C."/>
            <person name="Jauniaux N."/>
            <person name="Joyet P."/>
            <person name="Kachouri R."/>
            <person name="Kerrest A."/>
            <person name="Koszul R."/>
            <person name="Lemaire M."/>
            <person name="Lesur I."/>
            <person name="Ma L."/>
            <person name="Muller H."/>
            <person name="Nicaud J.-M."/>
            <person name="Nikolski M."/>
            <person name="Oztas S."/>
            <person name="Ozier-Kalogeropoulos O."/>
            <person name="Pellenz S."/>
            <person name="Potier S."/>
            <person name="Richard G.-F."/>
            <person name="Straub M.-L."/>
            <person name="Suleau A."/>
            <person name="Swennen D."/>
            <person name="Tekaia F."/>
            <person name="Wesolowski-Louvel M."/>
            <person name="Westhof E."/>
            <person name="Wirth B."/>
            <person name="Zeniou-Meyer M."/>
            <person name="Zivanovic Y."/>
            <person name="Bolotin-Fukuhara M."/>
            <person name="Thierry A."/>
            <person name="Bouchier C."/>
            <person name="Caudron B."/>
            <person name="Scarpelli C."/>
            <person name="Gaillardin C."/>
            <person name="Weissenbach J."/>
            <person name="Wincker P."/>
            <person name="Souciet J.-L."/>
        </authorList>
    </citation>
    <scope>NUCLEOTIDE SEQUENCE [LARGE SCALE GENOMIC DNA]</scope>
    <source>
        <strain>ATCC 2001 / BCRC 20586 / JCM 3761 / NBRC 0622 / NRRL Y-65 / CBS 138</strain>
    </source>
</reference>
<dbReference type="EMBL" id="CR380958">
    <property type="protein sequence ID" value="CAG62317.1"/>
    <property type="molecule type" value="Genomic_DNA"/>
</dbReference>
<dbReference type="RefSeq" id="XP_449343.1">
    <property type="nucleotide sequence ID" value="XM_449343.1"/>
</dbReference>
<dbReference type="SMR" id="Q6FKA1"/>
<dbReference type="FunCoup" id="Q6FKA1">
    <property type="interactions" value="76"/>
</dbReference>
<dbReference type="STRING" id="284593.Q6FKA1"/>
<dbReference type="EnsemblFungi" id="CAGL0L13200g-T">
    <property type="protein sequence ID" value="CAGL0L13200g-T-p1"/>
    <property type="gene ID" value="CAGL0L13200g"/>
</dbReference>
<dbReference type="KEGG" id="cgr:2890593"/>
<dbReference type="CGD" id="CAL0135672">
    <property type="gene designation" value="CAGL0L13200g"/>
</dbReference>
<dbReference type="VEuPathDB" id="FungiDB:B1J91_L13200g"/>
<dbReference type="VEuPathDB" id="FungiDB:CAGL0L13200g"/>
<dbReference type="eggNOG" id="KOG3251">
    <property type="taxonomic scope" value="Eukaryota"/>
</dbReference>
<dbReference type="HOGENOM" id="CLU_078260_1_0_1"/>
<dbReference type="InParanoid" id="Q6FKA1"/>
<dbReference type="OMA" id="FCWLVIH"/>
<dbReference type="Proteomes" id="UP000002428">
    <property type="component" value="Chromosome L"/>
</dbReference>
<dbReference type="GO" id="GO:0005789">
    <property type="term" value="C:endoplasmic reticulum membrane"/>
    <property type="evidence" value="ECO:0007669"/>
    <property type="project" value="UniProtKB-SubCell"/>
</dbReference>
<dbReference type="GO" id="GO:0012507">
    <property type="term" value="C:ER to Golgi transport vesicle membrane"/>
    <property type="evidence" value="ECO:0007669"/>
    <property type="project" value="EnsemblFungi"/>
</dbReference>
<dbReference type="GO" id="GO:0000139">
    <property type="term" value="C:Golgi membrane"/>
    <property type="evidence" value="ECO:0007669"/>
    <property type="project" value="UniProtKB-SubCell"/>
</dbReference>
<dbReference type="GO" id="GO:0031902">
    <property type="term" value="C:late endosome membrane"/>
    <property type="evidence" value="ECO:0007669"/>
    <property type="project" value="TreeGrafter"/>
</dbReference>
<dbReference type="GO" id="GO:0031201">
    <property type="term" value="C:SNARE complex"/>
    <property type="evidence" value="ECO:0007669"/>
    <property type="project" value="EnsemblFungi"/>
</dbReference>
<dbReference type="GO" id="GO:0005484">
    <property type="term" value="F:SNAP receptor activity"/>
    <property type="evidence" value="ECO:0007669"/>
    <property type="project" value="EnsemblFungi"/>
</dbReference>
<dbReference type="GO" id="GO:0000149">
    <property type="term" value="F:SNARE binding"/>
    <property type="evidence" value="ECO:0007669"/>
    <property type="project" value="TreeGrafter"/>
</dbReference>
<dbReference type="GO" id="GO:0006888">
    <property type="term" value="P:endoplasmic reticulum to Golgi vesicle-mediated transport"/>
    <property type="evidence" value="ECO:0007669"/>
    <property type="project" value="EnsemblFungi"/>
</dbReference>
<dbReference type="GO" id="GO:0006886">
    <property type="term" value="P:intracellular protein transport"/>
    <property type="evidence" value="ECO:0007669"/>
    <property type="project" value="EnsemblFungi"/>
</dbReference>
<dbReference type="GO" id="GO:0048280">
    <property type="term" value="P:vesicle fusion with Golgi apparatus"/>
    <property type="evidence" value="ECO:0007669"/>
    <property type="project" value="EnsemblFungi"/>
</dbReference>
<dbReference type="InterPro" id="IPR027027">
    <property type="entry name" value="GOSR2/Membrin/Bos1"/>
</dbReference>
<dbReference type="InterPro" id="IPR056173">
    <property type="entry name" value="Sec20_C"/>
</dbReference>
<dbReference type="PANTHER" id="PTHR21230:SF1">
    <property type="entry name" value="GOLGI SNAP RECEPTOR COMPLEX MEMBER 2"/>
    <property type="match status" value="1"/>
</dbReference>
<dbReference type="PANTHER" id="PTHR21230">
    <property type="entry name" value="VESICLE TRANSPORT V-SNARE PROTEIN VTI1-RELATED"/>
    <property type="match status" value="1"/>
</dbReference>
<dbReference type="Pfam" id="PF03908">
    <property type="entry name" value="Sec20"/>
    <property type="match status" value="1"/>
</dbReference>
<dbReference type="PIRSF" id="PIRSF028865">
    <property type="entry name" value="Membrin-2"/>
    <property type="match status" value="1"/>
</dbReference>
<protein>
    <recommendedName>
        <fullName>Protein transport protein BOS1</fullName>
    </recommendedName>
</protein>
<organism>
    <name type="scientific">Candida glabrata (strain ATCC 2001 / BCRC 20586 / JCM 3761 / NBRC 0622 / NRRL Y-65 / CBS 138)</name>
    <name type="common">Yeast</name>
    <name type="synonym">Nakaseomyces glabratus</name>
    <dbReference type="NCBI Taxonomy" id="284593"/>
    <lineage>
        <taxon>Eukaryota</taxon>
        <taxon>Fungi</taxon>
        <taxon>Dikarya</taxon>
        <taxon>Ascomycota</taxon>
        <taxon>Saccharomycotina</taxon>
        <taxon>Saccharomycetes</taxon>
        <taxon>Saccharomycetales</taxon>
        <taxon>Saccharomycetaceae</taxon>
        <taxon>Nakaseomyces</taxon>
    </lineage>
</organism>
<comment type="function">
    <text evidence="1">SNARE required for protein transport between the ER and the Golgi complex.</text>
</comment>
<comment type="subcellular location">
    <subcellularLocation>
        <location evidence="1">Golgi apparatus membrane</location>
        <topology evidence="1">Single-pass type IV membrane protein</topology>
    </subcellularLocation>
    <subcellularLocation>
        <location evidence="1">Endoplasmic reticulum membrane</location>
        <topology evidence="1">Single-pass type IV membrane protein</topology>
    </subcellularLocation>
</comment>
<comment type="similarity">
    <text evidence="3">Belongs to the BOS1 family.</text>
</comment>